<organism>
    <name type="scientific">Rickettsia africae (strain ESF-5)</name>
    <dbReference type="NCBI Taxonomy" id="347255"/>
    <lineage>
        <taxon>Bacteria</taxon>
        <taxon>Pseudomonadati</taxon>
        <taxon>Pseudomonadota</taxon>
        <taxon>Alphaproteobacteria</taxon>
        <taxon>Rickettsiales</taxon>
        <taxon>Rickettsiaceae</taxon>
        <taxon>Rickettsieae</taxon>
        <taxon>Rickettsia</taxon>
        <taxon>spotted fever group</taxon>
    </lineage>
</organism>
<evidence type="ECO:0000255" key="1">
    <source>
        <dbReference type="HAMAP-Rule" id="MF_01080"/>
    </source>
</evidence>
<feature type="chain" id="PRO_1000213507" description="tRNA pseudouridine synthase B">
    <location>
        <begin position="1"/>
        <end position="345"/>
    </location>
</feature>
<feature type="active site" description="Nucleophile" evidence="1">
    <location>
        <position position="39"/>
    </location>
</feature>
<protein>
    <recommendedName>
        <fullName evidence="1">tRNA pseudouridine synthase B</fullName>
        <ecNumber evidence="1">5.4.99.25</ecNumber>
    </recommendedName>
    <alternativeName>
        <fullName evidence="1">tRNA pseudouridine(55) synthase</fullName>
        <shortName evidence="1">Psi55 synthase</shortName>
    </alternativeName>
    <alternativeName>
        <fullName evidence="1">tRNA pseudouridylate synthase</fullName>
    </alternativeName>
    <alternativeName>
        <fullName evidence="1">tRNA-uridine isomerase</fullName>
    </alternativeName>
</protein>
<reference key="1">
    <citation type="journal article" date="2009" name="BMC Genomics">
        <title>Analysis of the Rickettsia africae genome reveals that virulence acquisition in Rickettsia species may be explained by genome reduction.</title>
        <authorList>
            <person name="Fournier P.-E."/>
            <person name="El Karkouri K."/>
            <person name="Leroy Q."/>
            <person name="Robert C."/>
            <person name="Giumelli B."/>
            <person name="Renesto P."/>
            <person name="Socolovschi C."/>
            <person name="Parola P."/>
            <person name="Audic S."/>
            <person name="Raoult D."/>
        </authorList>
    </citation>
    <scope>NUCLEOTIDE SEQUENCE [LARGE SCALE GENOMIC DNA]</scope>
    <source>
        <strain>ESF-5</strain>
    </source>
</reference>
<dbReference type="EC" id="5.4.99.25" evidence="1"/>
<dbReference type="EMBL" id="CP001612">
    <property type="protein sequence ID" value="ACP53514.1"/>
    <property type="molecule type" value="Genomic_DNA"/>
</dbReference>
<dbReference type="RefSeq" id="WP_012719725.1">
    <property type="nucleotide sequence ID" value="NC_012633.1"/>
</dbReference>
<dbReference type="SMR" id="C3PNK4"/>
<dbReference type="KEGG" id="raf:RAF_ORF0610"/>
<dbReference type="HOGENOM" id="CLU_032087_0_3_5"/>
<dbReference type="Proteomes" id="UP000002305">
    <property type="component" value="Chromosome"/>
</dbReference>
<dbReference type="GO" id="GO:0003723">
    <property type="term" value="F:RNA binding"/>
    <property type="evidence" value="ECO:0007669"/>
    <property type="project" value="InterPro"/>
</dbReference>
<dbReference type="GO" id="GO:0160148">
    <property type="term" value="F:tRNA pseudouridine(55) synthase activity"/>
    <property type="evidence" value="ECO:0007669"/>
    <property type="project" value="UniProtKB-EC"/>
</dbReference>
<dbReference type="GO" id="GO:1990481">
    <property type="term" value="P:mRNA pseudouridine synthesis"/>
    <property type="evidence" value="ECO:0007669"/>
    <property type="project" value="TreeGrafter"/>
</dbReference>
<dbReference type="GO" id="GO:0031119">
    <property type="term" value="P:tRNA pseudouridine synthesis"/>
    <property type="evidence" value="ECO:0007669"/>
    <property type="project" value="UniProtKB-UniRule"/>
</dbReference>
<dbReference type="CDD" id="cd02573">
    <property type="entry name" value="PseudoU_synth_EcTruB"/>
    <property type="match status" value="1"/>
</dbReference>
<dbReference type="Gene3D" id="3.30.2350.10">
    <property type="entry name" value="Pseudouridine synthase"/>
    <property type="match status" value="1"/>
</dbReference>
<dbReference type="HAMAP" id="MF_01080">
    <property type="entry name" value="TruB_bact"/>
    <property type="match status" value="1"/>
</dbReference>
<dbReference type="InterPro" id="IPR020103">
    <property type="entry name" value="PsdUridine_synth_cat_dom_sf"/>
</dbReference>
<dbReference type="InterPro" id="IPR002501">
    <property type="entry name" value="PsdUridine_synth_N"/>
</dbReference>
<dbReference type="InterPro" id="IPR005728">
    <property type="entry name" value="RPE1"/>
</dbReference>
<dbReference type="InterPro" id="IPR014780">
    <property type="entry name" value="tRNA_psdUridine_synth_TruB"/>
</dbReference>
<dbReference type="InterPro" id="IPR032819">
    <property type="entry name" value="TruB_C"/>
</dbReference>
<dbReference type="NCBIfam" id="TIGR01045">
    <property type="entry name" value="RPE1"/>
    <property type="match status" value="1"/>
</dbReference>
<dbReference type="NCBIfam" id="TIGR00431">
    <property type="entry name" value="TruB"/>
    <property type="match status" value="1"/>
</dbReference>
<dbReference type="PANTHER" id="PTHR13767:SF2">
    <property type="entry name" value="PSEUDOURIDYLATE SYNTHASE TRUB1"/>
    <property type="match status" value="1"/>
</dbReference>
<dbReference type="PANTHER" id="PTHR13767">
    <property type="entry name" value="TRNA-PSEUDOURIDINE SYNTHASE"/>
    <property type="match status" value="1"/>
</dbReference>
<dbReference type="Pfam" id="PF16198">
    <property type="entry name" value="TruB_C_2"/>
    <property type="match status" value="1"/>
</dbReference>
<dbReference type="Pfam" id="PF01509">
    <property type="entry name" value="TruB_N"/>
    <property type="match status" value="1"/>
</dbReference>
<dbReference type="SUPFAM" id="SSF55120">
    <property type="entry name" value="Pseudouridine synthase"/>
    <property type="match status" value="1"/>
</dbReference>
<proteinExistence type="inferred from homology"/>
<accession>C3PNK4</accession>
<gene>
    <name evidence="1" type="primary">truB</name>
    <name type="ordered locus">RAF_ORF0610</name>
</gene>
<keyword id="KW-0413">Isomerase</keyword>
<keyword id="KW-0819">tRNA processing</keyword>
<sequence length="345" mass="38762">MSNYWLNIYKPRGISSAQLVSIVKKILGKTKIGHAGTLDVEAEGILPFAVGEATKLIHLLIDARKTYIFTIKFGMQTNSGDCAGKVIATKDCIPSQEEAYAVCSKFIGNVTQIPPAFSALKVNGVRAYKLAREGKKVELKPRNITIYDLKCLNFDEKNATATYYTECSKGTYIRTLAEDLALSLQSLGFVIELRRTQVGIFKEENAIRIKSPDEITKNALEEKSIKIEAILDDILVLDATDSQAQQIKYGQKCLFNYEKDFRHLAKFAYREEFKGNTERSTTAYTLVREDASTGLTYKLPLEVEFGKMSVDLLWVRYKGTLLAIGSLNKSCFNSLRVFNLTQDFF</sequence>
<comment type="function">
    <text evidence="1">Responsible for synthesis of pseudouridine from uracil-55 in the psi GC loop of transfer RNAs.</text>
</comment>
<comment type="catalytic activity">
    <reaction evidence="1">
        <text>uridine(55) in tRNA = pseudouridine(55) in tRNA</text>
        <dbReference type="Rhea" id="RHEA:42532"/>
        <dbReference type="Rhea" id="RHEA-COMP:10101"/>
        <dbReference type="Rhea" id="RHEA-COMP:10102"/>
        <dbReference type="ChEBI" id="CHEBI:65314"/>
        <dbReference type="ChEBI" id="CHEBI:65315"/>
        <dbReference type="EC" id="5.4.99.25"/>
    </reaction>
</comment>
<comment type="similarity">
    <text evidence="1">Belongs to the pseudouridine synthase TruB family. Type 1 subfamily.</text>
</comment>
<name>TRUB_RICAE</name>